<reference key="1">
    <citation type="journal article" date="2003" name="Proc. Natl. Acad. Sci. U.S.A.">
        <title>Complete genome sequence and analysis of Wolinella succinogenes.</title>
        <authorList>
            <person name="Baar C."/>
            <person name="Eppinger M."/>
            <person name="Raddatz G."/>
            <person name="Simon J."/>
            <person name="Lanz C."/>
            <person name="Klimmek O."/>
            <person name="Nandakumar R."/>
            <person name="Gross R."/>
            <person name="Rosinus A."/>
            <person name="Keller H."/>
            <person name="Jagtap P."/>
            <person name="Linke B."/>
            <person name="Meyer F."/>
            <person name="Lederer H."/>
            <person name="Schuster S.C."/>
        </authorList>
    </citation>
    <scope>NUCLEOTIDE SEQUENCE [LARGE SCALE GENOMIC DNA]</scope>
    <source>
        <strain>ATCC 29543 / DSM 1740 / CCUG 13145 / JCM 31913 / LMG 7466 / NCTC 11488 / FDC 602W</strain>
    </source>
</reference>
<proteinExistence type="inferred from homology"/>
<comment type="function">
    <text evidence="1">Required for the formation of a threonylcarbamoyl group on adenosine at position 37 (t(6)A37) in tRNAs that read codons beginning with adenine. Is involved in the transfer of the threonylcarbamoyl moiety of threonylcarbamoyl-AMP (TC-AMP) to the N6 group of A37, together with TsaE and TsaB. TsaD likely plays a direct catalytic role in this reaction.</text>
</comment>
<comment type="catalytic activity">
    <reaction evidence="1">
        <text>L-threonylcarbamoyladenylate + adenosine(37) in tRNA = N(6)-L-threonylcarbamoyladenosine(37) in tRNA + AMP + H(+)</text>
        <dbReference type="Rhea" id="RHEA:37059"/>
        <dbReference type="Rhea" id="RHEA-COMP:10162"/>
        <dbReference type="Rhea" id="RHEA-COMP:10163"/>
        <dbReference type="ChEBI" id="CHEBI:15378"/>
        <dbReference type="ChEBI" id="CHEBI:73682"/>
        <dbReference type="ChEBI" id="CHEBI:74411"/>
        <dbReference type="ChEBI" id="CHEBI:74418"/>
        <dbReference type="ChEBI" id="CHEBI:456215"/>
        <dbReference type="EC" id="2.3.1.234"/>
    </reaction>
</comment>
<comment type="cofactor">
    <cofactor evidence="1">
        <name>Fe(2+)</name>
        <dbReference type="ChEBI" id="CHEBI:29033"/>
    </cofactor>
    <text evidence="1">Binds 1 Fe(2+) ion per subunit.</text>
</comment>
<comment type="subcellular location">
    <subcellularLocation>
        <location evidence="1">Cytoplasm</location>
    </subcellularLocation>
</comment>
<comment type="similarity">
    <text evidence="1">Belongs to the KAE1 / TsaD family.</text>
</comment>
<name>TSAD_WOLSU</name>
<organism>
    <name type="scientific">Wolinella succinogenes (strain ATCC 29543 / DSM 1740 / CCUG 13145 / JCM 31913 / LMG 7466 / NCTC 11488 / FDC 602W)</name>
    <name type="common">Vibrio succinogenes</name>
    <dbReference type="NCBI Taxonomy" id="273121"/>
    <lineage>
        <taxon>Bacteria</taxon>
        <taxon>Pseudomonadati</taxon>
        <taxon>Campylobacterota</taxon>
        <taxon>Epsilonproteobacteria</taxon>
        <taxon>Campylobacterales</taxon>
        <taxon>Helicobacteraceae</taxon>
        <taxon>Wolinella</taxon>
    </lineage>
</organism>
<protein>
    <recommendedName>
        <fullName evidence="1">tRNA N6-adenosine threonylcarbamoyltransferase</fullName>
        <ecNumber evidence="1">2.3.1.234</ecNumber>
    </recommendedName>
    <alternativeName>
        <fullName evidence="1">N6-L-threonylcarbamoyladenine synthase</fullName>
        <shortName evidence="1">t(6)A synthase</shortName>
    </alternativeName>
    <alternativeName>
        <fullName evidence="1">t(6)A37 threonylcarbamoyladenosine biosynthesis protein TsaD</fullName>
    </alternativeName>
    <alternativeName>
        <fullName evidence="1">tRNA threonylcarbamoyladenosine biosynthesis protein TsaD</fullName>
    </alternativeName>
</protein>
<accession>Q7M8K5</accession>
<evidence type="ECO:0000255" key="1">
    <source>
        <dbReference type="HAMAP-Rule" id="MF_01445"/>
    </source>
</evidence>
<dbReference type="EC" id="2.3.1.234" evidence="1"/>
<dbReference type="EMBL" id="BX571661">
    <property type="protein sequence ID" value="CAE10636.1"/>
    <property type="molecule type" value="Genomic_DNA"/>
</dbReference>
<dbReference type="RefSeq" id="WP_011139420.1">
    <property type="nucleotide sequence ID" value="NC_005090.1"/>
</dbReference>
<dbReference type="SMR" id="Q7M8K5"/>
<dbReference type="STRING" id="273121.WS1600"/>
<dbReference type="KEGG" id="wsu:WS1600"/>
<dbReference type="eggNOG" id="COG0533">
    <property type="taxonomic scope" value="Bacteria"/>
</dbReference>
<dbReference type="HOGENOM" id="CLU_023208_0_3_7"/>
<dbReference type="Proteomes" id="UP000000422">
    <property type="component" value="Chromosome"/>
</dbReference>
<dbReference type="GO" id="GO:0005737">
    <property type="term" value="C:cytoplasm"/>
    <property type="evidence" value="ECO:0007669"/>
    <property type="project" value="UniProtKB-SubCell"/>
</dbReference>
<dbReference type="GO" id="GO:0005506">
    <property type="term" value="F:iron ion binding"/>
    <property type="evidence" value="ECO:0007669"/>
    <property type="project" value="UniProtKB-UniRule"/>
</dbReference>
<dbReference type="GO" id="GO:0061711">
    <property type="term" value="F:N(6)-L-threonylcarbamoyladenine synthase activity"/>
    <property type="evidence" value="ECO:0007669"/>
    <property type="project" value="UniProtKB-EC"/>
</dbReference>
<dbReference type="GO" id="GO:0002949">
    <property type="term" value="P:tRNA threonylcarbamoyladenosine modification"/>
    <property type="evidence" value="ECO:0007669"/>
    <property type="project" value="UniProtKB-UniRule"/>
</dbReference>
<dbReference type="Gene3D" id="3.30.420.40">
    <property type="match status" value="2"/>
</dbReference>
<dbReference type="HAMAP" id="MF_01445">
    <property type="entry name" value="TsaD"/>
    <property type="match status" value="1"/>
</dbReference>
<dbReference type="InterPro" id="IPR043129">
    <property type="entry name" value="ATPase_NBD"/>
</dbReference>
<dbReference type="InterPro" id="IPR000905">
    <property type="entry name" value="Gcp-like_dom"/>
</dbReference>
<dbReference type="InterPro" id="IPR017861">
    <property type="entry name" value="KAE1/TsaD"/>
</dbReference>
<dbReference type="InterPro" id="IPR017860">
    <property type="entry name" value="Peptidase_M22_CS"/>
</dbReference>
<dbReference type="InterPro" id="IPR022450">
    <property type="entry name" value="TsaD"/>
</dbReference>
<dbReference type="NCBIfam" id="TIGR00329">
    <property type="entry name" value="gcp_kae1"/>
    <property type="match status" value="1"/>
</dbReference>
<dbReference type="NCBIfam" id="TIGR03723">
    <property type="entry name" value="T6A_TsaD_YgjD"/>
    <property type="match status" value="1"/>
</dbReference>
<dbReference type="PANTHER" id="PTHR11735">
    <property type="entry name" value="TRNA N6-ADENOSINE THREONYLCARBAMOYLTRANSFERASE"/>
    <property type="match status" value="1"/>
</dbReference>
<dbReference type="PANTHER" id="PTHR11735:SF6">
    <property type="entry name" value="TRNA N6-ADENOSINE THREONYLCARBAMOYLTRANSFERASE, MITOCHONDRIAL"/>
    <property type="match status" value="1"/>
</dbReference>
<dbReference type="Pfam" id="PF00814">
    <property type="entry name" value="TsaD"/>
    <property type="match status" value="1"/>
</dbReference>
<dbReference type="PRINTS" id="PR00789">
    <property type="entry name" value="OSIALOPTASE"/>
</dbReference>
<dbReference type="SUPFAM" id="SSF53067">
    <property type="entry name" value="Actin-like ATPase domain"/>
    <property type="match status" value="2"/>
</dbReference>
<dbReference type="PROSITE" id="PS01016">
    <property type="entry name" value="GLYCOPROTEASE"/>
    <property type="match status" value="1"/>
</dbReference>
<sequence>MILSIESSCDDSSIAITRLEDRAILFHKKISQDSAHSPHGGVVPELASRLHAVALPKILEECAPFFPRLKAIAVTNEPGLSVTLLEGVMMAKALALALHLPLIAVNHLKGHLYSLFLEQESRFPLDVLLVSGGHTMVLHARSFGEIEIIGQSMDDSFGESFDKVAKMLSLGYPGGPIVESYAKEGDASRFPLPLPLAGKKEVAFSFSGLKNAVRLVIQSLQNPPNEQEKRDICASFQATAIAHLIQKCRLYLATSNAPYLAIVGGASANLALREEMERLGEHFGKKLLLAPLAYCSDNAAMIGRAALESYALGAFTSPLELTVRPRTPSLC</sequence>
<keyword id="KW-0012">Acyltransferase</keyword>
<keyword id="KW-0963">Cytoplasm</keyword>
<keyword id="KW-0408">Iron</keyword>
<keyword id="KW-0479">Metal-binding</keyword>
<keyword id="KW-1185">Reference proteome</keyword>
<keyword id="KW-0808">Transferase</keyword>
<keyword id="KW-0819">tRNA processing</keyword>
<feature type="chain" id="PRO_0000303614" description="tRNA N6-adenosine threonylcarbamoyltransferase">
    <location>
        <begin position="1"/>
        <end position="331"/>
    </location>
</feature>
<feature type="binding site" evidence="1">
    <location>
        <position position="107"/>
    </location>
    <ligand>
        <name>Fe cation</name>
        <dbReference type="ChEBI" id="CHEBI:24875"/>
    </ligand>
</feature>
<feature type="binding site" evidence="1">
    <location>
        <position position="111"/>
    </location>
    <ligand>
        <name>Fe cation</name>
        <dbReference type="ChEBI" id="CHEBI:24875"/>
    </ligand>
</feature>
<feature type="binding site" evidence="1">
    <location>
        <begin position="129"/>
        <end position="133"/>
    </location>
    <ligand>
        <name>substrate</name>
    </ligand>
</feature>
<feature type="binding site" evidence="1">
    <location>
        <position position="162"/>
    </location>
    <ligand>
        <name>substrate</name>
    </ligand>
</feature>
<feature type="binding site" evidence="1">
    <location>
        <position position="175"/>
    </location>
    <ligand>
        <name>substrate</name>
    </ligand>
</feature>
<feature type="binding site" evidence="1">
    <location>
        <position position="269"/>
    </location>
    <ligand>
        <name>substrate</name>
    </ligand>
</feature>
<feature type="binding site" evidence="1">
    <location>
        <position position="297"/>
    </location>
    <ligand>
        <name>Fe cation</name>
        <dbReference type="ChEBI" id="CHEBI:24875"/>
    </ligand>
</feature>
<gene>
    <name evidence="1" type="primary">tsaD</name>
    <name type="synonym">gcp</name>
    <name type="ordered locus">WS1600</name>
</gene>